<reference key="1">
    <citation type="submission" date="2007-08" db="EMBL/GenBank/DDBJ databases">
        <authorList>
            <consortium name="The Vibrio harveyi Genome Sequencing Project"/>
            <person name="Bassler B."/>
            <person name="Clifton S.W."/>
            <person name="Fulton L."/>
            <person name="Delehaunty K."/>
            <person name="Fronick C."/>
            <person name="Harrison M."/>
            <person name="Markivic C."/>
            <person name="Fulton R."/>
            <person name="Tin-Wollam A.-M."/>
            <person name="Shah N."/>
            <person name="Pepin K."/>
            <person name="Nash W."/>
            <person name="Thiruvilangam P."/>
            <person name="Bhonagiri V."/>
            <person name="Waters C."/>
            <person name="Tu K.C."/>
            <person name="Irgon J."/>
            <person name="Wilson R.K."/>
        </authorList>
    </citation>
    <scope>NUCLEOTIDE SEQUENCE [LARGE SCALE GENOMIC DNA]</scope>
    <source>
        <strain>ATCC BAA-1116 / BB120</strain>
    </source>
</reference>
<organism>
    <name type="scientific">Vibrio campbellii (strain ATCC BAA-1116)</name>
    <dbReference type="NCBI Taxonomy" id="2902295"/>
    <lineage>
        <taxon>Bacteria</taxon>
        <taxon>Pseudomonadati</taxon>
        <taxon>Pseudomonadota</taxon>
        <taxon>Gammaproteobacteria</taxon>
        <taxon>Vibrionales</taxon>
        <taxon>Vibrionaceae</taxon>
        <taxon>Vibrio</taxon>
    </lineage>
</organism>
<proteinExistence type="inferred from homology"/>
<sequence>MIYSTTETIPGREIAEIKGVVTGNVVQSKHIGRDLMAGLKSIVGGEIRGYTEMMTEARNIAIQRMVEDAANLGADAVVGIRFTTSSIVDGSSEILAFGTAVKLL</sequence>
<dbReference type="EMBL" id="CP000789">
    <property type="protein sequence ID" value="ABU71055.1"/>
    <property type="molecule type" value="Genomic_DNA"/>
</dbReference>
<dbReference type="RefSeq" id="WP_012127823.1">
    <property type="nucleotide sequence ID" value="NC_022269.1"/>
</dbReference>
<dbReference type="SMR" id="A7MVJ3"/>
<dbReference type="KEGG" id="vha:VIBHAR_02090"/>
<dbReference type="PATRIC" id="fig|338187.25.peg.603"/>
<dbReference type="Proteomes" id="UP000008152">
    <property type="component" value="Chromosome I"/>
</dbReference>
<dbReference type="Gene3D" id="3.30.110.70">
    <property type="entry name" value="Hypothetical protein apc22750. Chain B"/>
    <property type="match status" value="1"/>
</dbReference>
<dbReference type="HAMAP" id="MF_00338">
    <property type="entry name" value="UPF0145"/>
    <property type="match status" value="1"/>
</dbReference>
<dbReference type="InterPro" id="IPR035439">
    <property type="entry name" value="UPF0145_dom_sf"/>
</dbReference>
<dbReference type="InterPro" id="IPR002765">
    <property type="entry name" value="UPF0145_YbjQ-like"/>
</dbReference>
<dbReference type="PANTHER" id="PTHR34068:SF2">
    <property type="entry name" value="UPF0145 PROTEIN SCO3412"/>
    <property type="match status" value="1"/>
</dbReference>
<dbReference type="PANTHER" id="PTHR34068">
    <property type="entry name" value="UPF0145 PROTEIN YBJQ"/>
    <property type="match status" value="1"/>
</dbReference>
<dbReference type="Pfam" id="PF01906">
    <property type="entry name" value="YbjQ_1"/>
    <property type="match status" value="1"/>
</dbReference>
<dbReference type="SUPFAM" id="SSF117782">
    <property type="entry name" value="YbjQ-like"/>
    <property type="match status" value="1"/>
</dbReference>
<feature type="chain" id="PRO_1000013039" description="UPF0145 protein VIBHAR_02090">
    <location>
        <begin position="1"/>
        <end position="104"/>
    </location>
</feature>
<evidence type="ECO:0000255" key="1">
    <source>
        <dbReference type="HAMAP-Rule" id="MF_00338"/>
    </source>
</evidence>
<protein>
    <recommendedName>
        <fullName evidence="1">UPF0145 protein VIBHAR_02090</fullName>
    </recommendedName>
</protein>
<accession>A7MVJ3</accession>
<comment type="similarity">
    <text evidence="1">Belongs to the UPF0145 family.</text>
</comment>
<gene>
    <name type="ordered locus">VIBHAR_02090</name>
</gene>
<name>Y2090_VIBC1</name>